<protein>
    <recommendedName>
        <fullName evidence="1">Large-conductance mechanosensitive channel</fullName>
    </recommendedName>
</protein>
<dbReference type="EMBL" id="CP000492">
    <property type="protein sequence ID" value="ABL65295.1"/>
    <property type="molecule type" value="Genomic_DNA"/>
</dbReference>
<dbReference type="RefSeq" id="WP_011745119.1">
    <property type="nucleotide sequence ID" value="NC_008639.1"/>
</dbReference>
<dbReference type="STRING" id="290317.Cpha266_1262"/>
<dbReference type="KEGG" id="cph:Cpha266_1262"/>
<dbReference type="eggNOG" id="COG1970">
    <property type="taxonomic scope" value="Bacteria"/>
</dbReference>
<dbReference type="HOGENOM" id="CLU_095787_0_0_10"/>
<dbReference type="OrthoDB" id="9810350at2"/>
<dbReference type="Proteomes" id="UP000008701">
    <property type="component" value="Chromosome"/>
</dbReference>
<dbReference type="GO" id="GO:0005886">
    <property type="term" value="C:plasma membrane"/>
    <property type="evidence" value="ECO:0007669"/>
    <property type="project" value="UniProtKB-SubCell"/>
</dbReference>
<dbReference type="GO" id="GO:0008381">
    <property type="term" value="F:mechanosensitive monoatomic ion channel activity"/>
    <property type="evidence" value="ECO:0007669"/>
    <property type="project" value="UniProtKB-UniRule"/>
</dbReference>
<dbReference type="Gene3D" id="1.10.1200.120">
    <property type="entry name" value="Large-conductance mechanosensitive channel, MscL, domain 1"/>
    <property type="match status" value="1"/>
</dbReference>
<dbReference type="HAMAP" id="MF_00115">
    <property type="entry name" value="MscL"/>
    <property type="match status" value="1"/>
</dbReference>
<dbReference type="InterPro" id="IPR019823">
    <property type="entry name" value="Mechanosensitive_channel_CS"/>
</dbReference>
<dbReference type="InterPro" id="IPR001185">
    <property type="entry name" value="MS_channel"/>
</dbReference>
<dbReference type="InterPro" id="IPR037673">
    <property type="entry name" value="MSC/AndL"/>
</dbReference>
<dbReference type="InterPro" id="IPR036019">
    <property type="entry name" value="MscL_channel"/>
</dbReference>
<dbReference type="NCBIfam" id="TIGR00220">
    <property type="entry name" value="mscL"/>
    <property type="match status" value="1"/>
</dbReference>
<dbReference type="PANTHER" id="PTHR30266:SF2">
    <property type="entry name" value="LARGE-CONDUCTANCE MECHANOSENSITIVE CHANNEL"/>
    <property type="match status" value="1"/>
</dbReference>
<dbReference type="PANTHER" id="PTHR30266">
    <property type="entry name" value="MECHANOSENSITIVE CHANNEL MSCL"/>
    <property type="match status" value="1"/>
</dbReference>
<dbReference type="Pfam" id="PF01741">
    <property type="entry name" value="MscL"/>
    <property type="match status" value="1"/>
</dbReference>
<dbReference type="PRINTS" id="PR01264">
    <property type="entry name" value="MECHCHANNEL"/>
</dbReference>
<dbReference type="SUPFAM" id="SSF81330">
    <property type="entry name" value="Gated mechanosensitive channel"/>
    <property type="match status" value="1"/>
</dbReference>
<dbReference type="PROSITE" id="PS01327">
    <property type="entry name" value="MSCL"/>
    <property type="match status" value="1"/>
</dbReference>
<reference key="1">
    <citation type="submission" date="2006-12" db="EMBL/GenBank/DDBJ databases">
        <title>Complete sequence of Chlorobium phaeobacteroides DSM 266.</title>
        <authorList>
            <consortium name="US DOE Joint Genome Institute"/>
            <person name="Copeland A."/>
            <person name="Lucas S."/>
            <person name="Lapidus A."/>
            <person name="Barry K."/>
            <person name="Detter J.C."/>
            <person name="Glavina del Rio T."/>
            <person name="Hammon N."/>
            <person name="Israni S."/>
            <person name="Pitluck S."/>
            <person name="Goltsman E."/>
            <person name="Schmutz J."/>
            <person name="Larimer F."/>
            <person name="Land M."/>
            <person name="Hauser L."/>
            <person name="Mikhailova N."/>
            <person name="Li T."/>
            <person name="Overmann J."/>
            <person name="Bryant D.A."/>
            <person name="Richardson P."/>
        </authorList>
    </citation>
    <scope>NUCLEOTIDE SEQUENCE [LARGE SCALE GENOMIC DNA]</scope>
    <source>
        <strain>DSM 266 / SMG 266 / 2430</strain>
    </source>
</reference>
<gene>
    <name evidence="1" type="primary">mscL</name>
    <name type="ordered locus">Cpha266_1262</name>
</gene>
<proteinExistence type="inferred from homology"/>
<sequence>MLKEFKDFAVRGNVVDMAVGIIIGAAFTTIINTLVNEVVMPPIGVLLGGVDFSDFYLLLKEGSKAAPYESLAAAKSAGAVTLSYGIFVNACISFLIVTFVMFLSVKGINRLRAKEDAAPDPAVRECPFCCSPVSVKAKRCPMCTSELK</sequence>
<feature type="chain" id="PRO_1000015370" description="Large-conductance mechanosensitive channel">
    <location>
        <begin position="1"/>
        <end position="148"/>
    </location>
</feature>
<feature type="transmembrane region" description="Helical" evidence="1">
    <location>
        <begin position="14"/>
        <end position="34"/>
    </location>
</feature>
<feature type="transmembrane region" description="Helical" evidence="1">
    <location>
        <begin position="85"/>
        <end position="105"/>
    </location>
</feature>
<keyword id="KW-0997">Cell inner membrane</keyword>
<keyword id="KW-1003">Cell membrane</keyword>
<keyword id="KW-0407">Ion channel</keyword>
<keyword id="KW-0406">Ion transport</keyword>
<keyword id="KW-0472">Membrane</keyword>
<keyword id="KW-1185">Reference proteome</keyword>
<keyword id="KW-0812">Transmembrane</keyword>
<keyword id="KW-1133">Transmembrane helix</keyword>
<keyword id="KW-0813">Transport</keyword>
<comment type="function">
    <text evidence="1">Channel that opens in response to stretch forces in the membrane lipid bilayer. May participate in the regulation of osmotic pressure changes within the cell.</text>
</comment>
<comment type="subunit">
    <text evidence="1">Homopentamer.</text>
</comment>
<comment type="subcellular location">
    <subcellularLocation>
        <location evidence="1">Cell inner membrane</location>
        <topology evidence="1">Multi-pass membrane protein</topology>
    </subcellularLocation>
</comment>
<comment type="similarity">
    <text evidence="1">Belongs to the MscL family.</text>
</comment>
<evidence type="ECO:0000255" key="1">
    <source>
        <dbReference type="HAMAP-Rule" id="MF_00115"/>
    </source>
</evidence>
<name>MSCL_CHLPD</name>
<accession>A1BFW8</accession>
<organism>
    <name type="scientific">Chlorobium phaeobacteroides (strain DSM 266 / SMG 266 / 2430)</name>
    <dbReference type="NCBI Taxonomy" id="290317"/>
    <lineage>
        <taxon>Bacteria</taxon>
        <taxon>Pseudomonadati</taxon>
        <taxon>Chlorobiota</taxon>
        <taxon>Chlorobiia</taxon>
        <taxon>Chlorobiales</taxon>
        <taxon>Chlorobiaceae</taxon>
        <taxon>Chlorobium/Pelodictyon group</taxon>
        <taxon>Chlorobium</taxon>
    </lineage>
</organism>